<gene>
    <name evidence="1" type="primary">apt</name>
    <name type="ordered locus">Cpha266_0423</name>
</gene>
<sequence>MTIKSRIRSIPDYPKKGIMFRDITTLIKDPVGFRLVIDNLTQHYLQNGVDFDVIVGIEARGFIIGGALSYALGKGFVPVRKPGKLPADVASQKYELEYGSDTIEIHIDALEEGSRVLLVDDLLATGGTALAAAALVEKVGGVVAEMAFIVNLPDVGGEQRILDKGYSIFSLTDFEGD</sequence>
<name>APT_CHLPD</name>
<protein>
    <recommendedName>
        <fullName evidence="1">Adenine phosphoribosyltransferase</fullName>
        <shortName evidence="1">APRT</shortName>
        <ecNumber evidence="1">2.4.2.7</ecNumber>
    </recommendedName>
</protein>
<keyword id="KW-0963">Cytoplasm</keyword>
<keyword id="KW-0328">Glycosyltransferase</keyword>
<keyword id="KW-0660">Purine salvage</keyword>
<keyword id="KW-1185">Reference proteome</keyword>
<keyword id="KW-0808">Transferase</keyword>
<organism>
    <name type="scientific">Chlorobium phaeobacteroides (strain DSM 266 / SMG 266 / 2430)</name>
    <dbReference type="NCBI Taxonomy" id="290317"/>
    <lineage>
        <taxon>Bacteria</taxon>
        <taxon>Pseudomonadati</taxon>
        <taxon>Chlorobiota</taxon>
        <taxon>Chlorobiia</taxon>
        <taxon>Chlorobiales</taxon>
        <taxon>Chlorobiaceae</taxon>
        <taxon>Chlorobium/Pelodictyon group</taxon>
        <taxon>Chlorobium</taxon>
    </lineage>
</organism>
<accession>A1BDK4</accession>
<feature type="chain" id="PRO_1000000273" description="Adenine phosphoribosyltransferase">
    <location>
        <begin position="1"/>
        <end position="177"/>
    </location>
</feature>
<comment type="function">
    <text evidence="1">Catalyzes a salvage reaction resulting in the formation of AMP, that is energically less costly than de novo synthesis.</text>
</comment>
<comment type="catalytic activity">
    <reaction evidence="1">
        <text>AMP + diphosphate = 5-phospho-alpha-D-ribose 1-diphosphate + adenine</text>
        <dbReference type="Rhea" id="RHEA:16609"/>
        <dbReference type="ChEBI" id="CHEBI:16708"/>
        <dbReference type="ChEBI" id="CHEBI:33019"/>
        <dbReference type="ChEBI" id="CHEBI:58017"/>
        <dbReference type="ChEBI" id="CHEBI:456215"/>
        <dbReference type="EC" id="2.4.2.7"/>
    </reaction>
</comment>
<comment type="pathway">
    <text evidence="1">Purine metabolism; AMP biosynthesis via salvage pathway; AMP from adenine: step 1/1.</text>
</comment>
<comment type="subunit">
    <text evidence="1">Homodimer.</text>
</comment>
<comment type="subcellular location">
    <subcellularLocation>
        <location evidence="1">Cytoplasm</location>
    </subcellularLocation>
</comment>
<comment type="similarity">
    <text evidence="1">Belongs to the purine/pyrimidine phosphoribosyltransferase family.</text>
</comment>
<proteinExistence type="inferred from homology"/>
<dbReference type="EC" id="2.4.2.7" evidence="1"/>
<dbReference type="EMBL" id="CP000492">
    <property type="protein sequence ID" value="ABL64481.1"/>
    <property type="molecule type" value="Genomic_DNA"/>
</dbReference>
<dbReference type="RefSeq" id="WP_011744314.1">
    <property type="nucleotide sequence ID" value="NC_008639.1"/>
</dbReference>
<dbReference type="SMR" id="A1BDK4"/>
<dbReference type="STRING" id="290317.Cpha266_0423"/>
<dbReference type="KEGG" id="cph:Cpha266_0423"/>
<dbReference type="eggNOG" id="COG0503">
    <property type="taxonomic scope" value="Bacteria"/>
</dbReference>
<dbReference type="HOGENOM" id="CLU_063339_3_0_10"/>
<dbReference type="OrthoDB" id="9803963at2"/>
<dbReference type="UniPathway" id="UPA00588">
    <property type="reaction ID" value="UER00646"/>
</dbReference>
<dbReference type="Proteomes" id="UP000008701">
    <property type="component" value="Chromosome"/>
</dbReference>
<dbReference type="GO" id="GO:0005737">
    <property type="term" value="C:cytoplasm"/>
    <property type="evidence" value="ECO:0007669"/>
    <property type="project" value="UniProtKB-SubCell"/>
</dbReference>
<dbReference type="GO" id="GO:0002055">
    <property type="term" value="F:adenine binding"/>
    <property type="evidence" value="ECO:0007669"/>
    <property type="project" value="TreeGrafter"/>
</dbReference>
<dbReference type="GO" id="GO:0003999">
    <property type="term" value="F:adenine phosphoribosyltransferase activity"/>
    <property type="evidence" value="ECO:0007669"/>
    <property type="project" value="UniProtKB-UniRule"/>
</dbReference>
<dbReference type="GO" id="GO:0016208">
    <property type="term" value="F:AMP binding"/>
    <property type="evidence" value="ECO:0007669"/>
    <property type="project" value="TreeGrafter"/>
</dbReference>
<dbReference type="GO" id="GO:0006168">
    <property type="term" value="P:adenine salvage"/>
    <property type="evidence" value="ECO:0007669"/>
    <property type="project" value="InterPro"/>
</dbReference>
<dbReference type="GO" id="GO:0044209">
    <property type="term" value="P:AMP salvage"/>
    <property type="evidence" value="ECO:0007669"/>
    <property type="project" value="UniProtKB-UniRule"/>
</dbReference>
<dbReference type="GO" id="GO:0006166">
    <property type="term" value="P:purine ribonucleoside salvage"/>
    <property type="evidence" value="ECO:0007669"/>
    <property type="project" value="UniProtKB-KW"/>
</dbReference>
<dbReference type="CDD" id="cd06223">
    <property type="entry name" value="PRTases_typeI"/>
    <property type="match status" value="1"/>
</dbReference>
<dbReference type="FunFam" id="3.40.50.2020:FF:000021">
    <property type="entry name" value="Adenine phosphoribosyltransferase"/>
    <property type="match status" value="1"/>
</dbReference>
<dbReference type="Gene3D" id="3.40.50.2020">
    <property type="match status" value="1"/>
</dbReference>
<dbReference type="HAMAP" id="MF_00004">
    <property type="entry name" value="Aden_phosphoribosyltr"/>
    <property type="match status" value="1"/>
</dbReference>
<dbReference type="InterPro" id="IPR005764">
    <property type="entry name" value="Ade_phspho_trans"/>
</dbReference>
<dbReference type="InterPro" id="IPR000836">
    <property type="entry name" value="PRibTrfase_dom"/>
</dbReference>
<dbReference type="InterPro" id="IPR029057">
    <property type="entry name" value="PRTase-like"/>
</dbReference>
<dbReference type="InterPro" id="IPR050054">
    <property type="entry name" value="UPRTase/APRTase"/>
</dbReference>
<dbReference type="NCBIfam" id="TIGR01090">
    <property type="entry name" value="apt"/>
    <property type="match status" value="1"/>
</dbReference>
<dbReference type="NCBIfam" id="NF002634">
    <property type="entry name" value="PRK02304.1-3"/>
    <property type="match status" value="1"/>
</dbReference>
<dbReference type="NCBIfam" id="NF002636">
    <property type="entry name" value="PRK02304.1-5"/>
    <property type="match status" value="1"/>
</dbReference>
<dbReference type="PANTHER" id="PTHR32315">
    <property type="entry name" value="ADENINE PHOSPHORIBOSYLTRANSFERASE"/>
    <property type="match status" value="1"/>
</dbReference>
<dbReference type="PANTHER" id="PTHR32315:SF3">
    <property type="entry name" value="ADENINE PHOSPHORIBOSYLTRANSFERASE"/>
    <property type="match status" value="1"/>
</dbReference>
<dbReference type="Pfam" id="PF00156">
    <property type="entry name" value="Pribosyltran"/>
    <property type="match status" value="1"/>
</dbReference>
<dbReference type="SUPFAM" id="SSF53271">
    <property type="entry name" value="PRTase-like"/>
    <property type="match status" value="1"/>
</dbReference>
<dbReference type="PROSITE" id="PS00103">
    <property type="entry name" value="PUR_PYR_PR_TRANSFER"/>
    <property type="match status" value="1"/>
</dbReference>
<evidence type="ECO:0000255" key="1">
    <source>
        <dbReference type="HAMAP-Rule" id="MF_00004"/>
    </source>
</evidence>
<reference key="1">
    <citation type="submission" date="2006-12" db="EMBL/GenBank/DDBJ databases">
        <title>Complete sequence of Chlorobium phaeobacteroides DSM 266.</title>
        <authorList>
            <consortium name="US DOE Joint Genome Institute"/>
            <person name="Copeland A."/>
            <person name="Lucas S."/>
            <person name="Lapidus A."/>
            <person name="Barry K."/>
            <person name="Detter J.C."/>
            <person name="Glavina del Rio T."/>
            <person name="Hammon N."/>
            <person name="Israni S."/>
            <person name="Pitluck S."/>
            <person name="Goltsman E."/>
            <person name="Schmutz J."/>
            <person name="Larimer F."/>
            <person name="Land M."/>
            <person name="Hauser L."/>
            <person name="Mikhailova N."/>
            <person name="Li T."/>
            <person name="Overmann J."/>
            <person name="Bryant D.A."/>
            <person name="Richardson P."/>
        </authorList>
    </citation>
    <scope>NUCLEOTIDE SEQUENCE [LARGE SCALE GENOMIC DNA]</scope>
    <source>
        <strain>DSM 266 / SMG 266 / 2430</strain>
    </source>
</reference>